<organism>
    <name type="scientific">Staphylococcus aureus (strain N315)</name>
    <dbReference type="NCBI Taxonomy" id="158879"/>
    <lineage>
        <taxon>Bacteria</taxon>
        <taxon>Bacillati</taxon>
        <taxon>Bacillota</taxon>
        <taxon>Bacilli</taxon>
        <taxon>Bacillales</taxon>
        <taxon>Staphylococcaceae</taxon>
        <taxon>Staphylococcus</taxon>
    </lineage>
</organism>
<feature type="chain" id="PRO_0000359991" description="Fructose-1,6-bisphosphatase class 3">
    <location>
        <begin position="1"/>
        <end position="654"/>
    </location>
</feature>
<feature type="region of interest" description="Disordered" evidence="2">
    <location>
        <begin position="288"/>
        <end position="307"/>
    </location>
</feature>
<feature type="compositionally biased region" description="Basic and acidic residues" evidence="2">
    <location>
        <begin position="298"/>
        <end position="307"/>
    </location>
</feature>
<comment type="catalytic activity">
    <reaction evidence="1">
        <text>beta-D-fructose 1,6-bisphosphate + H2O = beta-D-fructose 6-phosphate + phosphate</text>
        <dbReference type="Rhea" id="RHEA:11064"/>
        <dbReference type="ChEBI" id="CHEBI:15377"/>
        <dbReference type="ChEBI" id="CHEBI:32966"/>
        <dbReference type="ChEBI" id="CHEBI:43474"/>
        <dbReference type="ChEBI" id="CHEBI:57634"/>
        <dbReference type="EC" id="3.1.3.11"/>
    </reaction>
</comment>
<comment type="cofactor">
    <cofactor evidence="1">
        <name>Mn(2+)</name>
        <dbReference type="ChEBI" id="CHEBI:29035"/>
    </cofactor>
</comment>
<comment type="pathway">
    <text evidence="1">Carbohydrate biosynthesis; gluconeogenesis.</text>
</comment>
<comment type="similarity">
    <text evidence="1">Belongs to the FBPase class 3 family.</text>
</comment>
<name>F16PC_STAAN</name>
<gene>
    <name evidence="1" type="primary">fbp</name>
    <name type="ordered locus">SA2304</name>
</gene>
<accession>Q7A3I5</accession>
<keyword id="KW-0119">Carbohydrate metabolism</keyword>
<keyword id="KW-0378">Hydrolase</keyword>
<keyword id="KW-0464">Manganese</keyword>
<protein>
    <recommendedName>
        <fullName evidence="1">Fructose-1,6-bisphosphatase class 3</fullName>
        <shortName evidence="1">FBPase class 3</shortName>
        <ecNumber evidence="1">3.1.3.11</ecNumber>
    </recommendedName>
    <alternativeName>
        <fullName evidence="1">D-fructose-1,6-bisphosphate 1-phosphohydrolase class 3</fullName>
    </alternativeName>
</protein>
<sequence length="654" mass="76175">MTQITEKELKKKYLDLLSQNFDTPEKLATEIINLESILELPKGTEHFVSDLHGEYEAFQHVLRNGSGNVRAKINDIFKERLSTKELNDLTALVYYPEDKLKLIKSDFQSCGQLNVWYITTIEHLIELIKYCSSKYTRSKLRKALPKQYVYIIEELLYKSNEYQNKKSYYETLVNQVIELKQADDLIIGLAYSVQRLVVDHLHVVGDIYDRGPQPDKIMDTLINYHSLDIQWGNHDVLWVGAYAGSKVCLANLLRICARYDNLDIIEDAYGINLRPLLTLAEKYYDADNPAFKPKKRPDKHERLTQREESQITKIHQAIAMIQFKLEIPIIKRRPNFEMEERLVLEKVNYDTNEITVYGNTYPLKDTCFQTINRNNPAELLPEEEEVMNKLLLSFQQSEKLRRHMSFLMRKGSLYLPYNGNLLIHGCIPVDENGEMESFEIDGHTYSGQELLDVFEYHVRKSFDEKENTDDLSTDLVWYLWTGKYSSLFGKRAMTTFERYFIADKASHKEEKNPYYHLREDVNMVRKMLSDFGLNPDEGRIINGHTPVKEINGEDPIKADGKMLVIDGGFSKAYQSTTGIAGYTLLYNSFGMQLVAHQQFNAKEKILSEGIDELSIKRVVDKELQRKKIRDTNIGKELQAQIDILKMLMHDRYLD</sequence>
<dbReference type="EC" id="3.1.3.11" evidence="1"/>
<dbReference type="EMBL" id="BA000018">
    <property type="protein sequence ID" value="BAB43607.1"/>
    <property type="molecule type" value="Genomic_DNA"/>
</dbReference>
<dbReference type="PIR" id="E90055">
    <property type="entry name" value="E90055"/>
</dbReference>
<dbReference type="RefSeq" id="WP_000192172.1">
    <property type="nucleotide sequence ID" value="NC_002745.2"/>
</dbReference>
<dbReference type="EnsemblBacteria" id="BAB43607">
    <property type="protein sequence ID" value="BAB43607"/>
    <property type="gene ID" value="BAB43607"/>
</dbReference>
<dbReference type="KEGG" id="sau:SA2304"/>
<dbReference type="HOGENOM" id="CLU_028392_2_0_9"/>
<dbReference type="UniPathway" id="UPA00138"/>
<dbReference type="GO" id="GO:0042132">
    <property type="term" value="F:fructose 1,6-bisphosphate 1-phosphatase activity"/>
    <property type="evidence" value="ECO:0007669"/>
    <property type="project" value="UniProtKB-UniRule"/>
</dbReference>
<dbReference type="GO" id="GO:0006094">
    <property type="term" value="P:gluconeogenesis"/>
    <property type="evidence" value="ECO:0007669"/>
    <property type="project" value="UniProtKB-UniRule"/>
</dbReference>
<dbReference type="Gene3D" id="3.60.21.10">
    <property type="match status" value="1"/>
</dbReference>
<dbReference type="HAMAP" id="MF_01854">
    <property type="entry name" value="FBPase_class3"/>
    <property type="match status" value="1"/>
</dbReference>
<dbReference type="InterPro" id="IPR009164">
    <property type="entry name" value="FBPtase_class3"/>
</dbReference>
<dbReference type="InterPro" id="IPR029052">
    <property type="entry name" value="Metallo-depent_PP-like"/>
</dbReference>
<dbReference type="Pfam" id="PF06874">
    <property type="entry name" value="FBPase_2"/>
    <property type="match status" value="1"/>
</dbReference>
<dbReference type="PIRSF" id="PIRSF000906">
    <property type="entry name" value="FBPtase_Bacill"/>
    <property type="match status" value="1"/>
</dbReference>
<dbReference type="SUPFAM" id="SSF56300">
    <property type="entry name" value="Metallo-dependent phosphatases"/>
    <property type="match status" value="2"/>
</dbReference>
<evidence type="ECO:0000255" key="1">
    <source>
        <dbReference type="HAMAP-Rule" id="MF_01854"/>
    </source>
</evidence>
<evidence type="ECO:0000256" key="2">
    <source>
        <dbReference type="SAM" id="MobiDB-lite"/>
    </source>
</evidence>
<proteinExistence type="evidence at protein level"/>
<reference key="1">
    <citation type="journal article" date="2001" name="Lancet">
        <title>Whole genome sequencing of meticillin-resistant Staphylococcus aureus.</title>
        <authorList>
            <person name="Kuroda M."/>
            <person name="Ohta T."/>
            <person name="Uchiyama I."/>
            <person name="Baba T."/>
            <person name="Yuzawa H."/>
            <person name="Kobayashi I."/>
            <person name="Cui L."/>
            <person name="Oguchi A."/>
            <person name="Aoki K."/>
            <person name="Nagai Y."/>
            <person name="Lian J.-Q."/>
            <person name="Ito T."/>
            <person name="Kanamori M."/>
            <person name="Matsumaru H."/>
            <person name="Maruyama A."/>
            <person name="Murakami H."/>
            <person name="Hosoyama A."/>
            <person name="Mizutani-Ui Y."/>
            <person name="Takahashi N.K."/>
            <person name="Sawano T."/>
            <person name="Inoue R."/>
            <person name="Kaito C."/>
            <person name="Sekimizu K."/>
            <person name="Hirakawa H."/>
            <person name="Kuhara S."/>
            <person name="Goto S."/>
            <person name="Yabuzaki J."/>
            <person name="Kanehisa M."/>
            <person name="Yamashita A."/>
            <person name="Oshima K."/>
            <person name="Furuya K."/>
            <person name="Yoshino C."/>
            <person name="Shiba T."/>
            <person name="Hattori M."/>
            <person name="Ogasawara N."/>
            <person name="Hayashi H."/>
            <person name="Hiramatsu K."/>
        </authorList>
    </citation>
    <scope>NUCLEOTIDE SEQUENCE [LARGE SCALE GENOMIC DNA]</scope>
    <source>
        <strain>N315</strain>
    </source>
</reference>
<reference key="2">
    <citation type="submission" date="2007-10" db="UniProtKB">
        <title>Shotgun proteomic analysis of total and membrane protein extracts of S. aureus strain N315.</title>
        <authorList>
            <person name="Vaezzadeh A.R."/>
            <person name="Deshusses J."/>
            <person name="Lescuyer P."/>
            <person name="Hochstrasser D.F."/>
        </authorList>
    </citation>
    <scope>IDENTIFICATION BY MASS SPECTROMETRY [LARGE SCALE ANALYSIS]</scope>
    <source>
        <strain>N315</strain>
    </source>
</reference>